<gene>
    <name evidence="1" type="primary">dtd</name>
    <name type="ordered locus">Vapar_4668</name>
</gene>
<proteinExistence type="inferred from homology"/>
<organism>
    <name type="scientific">Variovorax paradoxus (strain S110)</name>
    <dbReference type="NCBI Taxonomy" id="543728"/>
    <lineage>
        <taxon>Bacteria</taxon>
        <taxon>Pseudomonadati</taxon>
        <taxon>Pseudomonadota</taxon>
        <taxon>Betaproteobacteria</taxon>
        <taxon>Burkholderiales</taxon>
        <taxon>Comamonadaceae</taxon>
        <taxon>Variovorax</taxon>
    </lineage>
</organism>
<evidence type="ECO:0000255" key="1">
    <source>
        <dbReference type="HAMAP-Rule" id="MF_00518"/>
    </source>
</evidence>
<dbReference type="EC" id="3.1.1.96" evidence="1"/>
<dbReference type="EMBL" id="CP001635">
    <property type="protein sequence ID" value="ACS21273.1"/>
    <property type="molecule type" value="Genomic_DNA"/>
</dbReference>
<dbReference type="SMR" id="C5CM14"/>
<dbReference type="STRING" id="543728.Vapar_4668"/>
<dbReference type="KEGG" id="vap:Vapar_4668"/>
<dbReference type="eggNOG" id="COG1490">
    <property type="taxonomic scope" value="Bacteria"/>
</dbReference>
<dbReference type="HOGENOM" id="CLU_076901_1_1_4"/>
<dbReference type="OrthoDB" id="9801395at2"/>
<dbReference type="GO" id="GO:0005737">
    <property type="term" value="C:cytoplasm"/>
    <property type="evidence" value="ECO:0007669"/>
    <property type="project" value="UniProtKB-SubCell"/>
</dbReference>
<dbReference type="GO" id="GO:0051500">
    <property type="term" value="F:D-tyrosyl-tRNA(Tyr) deacylase activity"/>
    <property type="evidence" value="ECO:0007669"/>
    <property type="project" value="TreeGrafter"/>
</dbReference>
<dbReference type="GO" id="GO:0106026">
    <property type="term" value="F:Gly-tRNA(Ala) deacylase activity"/>
    <property type="evidence" value="ECO:0007669"/>
    <property type="project" value="UniProtKB-UniRule"/>
</dbReference>
<dbReference type="GO" id="GO:0043908">
    <property type="term" value="F:Ser(Gly)-tRNA(Ala) hydrolase activity"/>
    <property type="evidence" value="ECO:0007669"/>
    <property type="project" value="UniProtKB-UniRule"/>
</dbReference>
<dbReference type="GO" id="GO:0000049">
    <property type="term" value="F:tRNA binding"/>
    <property type="evidence" value="ECO:0007669"/>
    <property type="project" value="UniProtKB-UniRule"/>
</dbReference>
<dbReference type="GO" id="GO:0019478">
    <property type="term" value="P:D-amino acid catabolic process"/>
    <property type="evidence" value="ECO:0007669"/>
    <property type="project" value="UniProtKB-UniRule"/>
</dbReference>
<dbReference type="CDD" id="cd00563">
    <property type="entry name" value="Dtyr_deacylase"/>
    <property type="match status" value="1"/>
</dbReference>
<dbReference type="FunFam" id="3.50.80.10:FF:000001">
    <property type="entry name" value="D-aminoacyl-tRNA deacylase"/>
    <property type="match status" value="1"/>
</dbReference>
<dbReference type="Gene3D" id="3.50.80.10">
    <property type="entry name" value="D-tyrosyl-tRNA(Tyr) deacylase"/>
    <property type="match status" value="1"/>
</dbReference>
<dbReference type="HAMAP" id="MF_00518">
    <property type="entry name" value="Deacylase_Dtd"/>
    <property type="match status" value="1"/>
</dbReference>
<dbReference type="InterPro" id="IPR003732">
    <property type="entry name" value="Daa-tRNA_deacyls_DTD"/>
</dbReference>
<dbReference type="InterPro" id="IPR023509">
    <property type="entry name" value="DTD-like_sf"/>
</dbReference>
<dbReference type="NCBIfam" id="TIGR00256">
    <property type="entry name" value="D-aminoacyl-tRNA deacylase"/>
    <property type="match status" value="1"/>
</dbReference>
<dbReference type="PANTHER" id="PTHR10472:SF5">
    <property type="entry name" value="D-AMINOACYL-TRNA DEACYLASE 1"/>
    <property type="match status" value="1"/>
</dbReference>
<dbReference type="PANTHER" id="PTHR10472">
    <property type="entry name" value="D-TYROSYL-TRNA TYR DEACYLASE"/>
    <property type="match status" value="1"/>
</dbReference>
<dbReference type="Pfam" id="PF02580">
    <property type="entry name" value="Tyr_Deacylase"/>
    <property type="match status" value="1"/>
</dbReference>
<dbReference type="SUPFAM" id="SSF69500">
    <property type="entry name" value="DTD-like"/>
    <property type="match status" value="1"/>
</dbReference>
<accession>C5CM14</accession>
<protein>
    <recommendedName>
        <fullName evidence="1">D-aminoacyl-tRNA deacylase</fullName>
        <shortName evidence="1">DTD</shortName>
        <ecNumber evidence="1">3.1.1.96</ecNumber>
    </recommendedName>
    <alternativeName>
        <fullName evidence="1">Gly-tRNA(Ala) deacylase</fullName>
    </alternativeName>
</protein>
<comment type="function">
    <text evidence="1">An aminoacyl-tRNA editing enzyme that deacylates mischarged D-aminoacyl-tRNAs. Also deacylates mischarged glycyl-tRNA(Ala), protecting cells against glycine mischarging by AlaRS. Acts via tRNA-based rather than protein-based catalysis; rejects L-amino acids rather than detecting D-amino acids in the active site. By recycling D-aminoacyl-tRNA to D-amino acids and free tRNA molecules, this enzyme counteracts the toxicity associated with the formation of D-aminoacyl-tRNA entities in vivo and helps enforce protein L-homochirality.</text>
</comment>
<comment type="catalytic activity">
    <reaction evidence="1">
        <text>glycyl-tRNA(Ala) + H2O = tRNA(Ala) + glycine + H(+)</text>
        <dbReference type="Rhea" id="RHEA:53744"/>
        <dbReference type="Rhea" id="RHEA-COMP:9657"/>
        <dbReference type="Rhea" id="RHEA-COMP:13640"/>
        <dbReference type="ChEBI" id="CHEBI:15377"/>
        <dbReference type="ChEBI" id="CHEBI:15378"/>
        <dbReference type="ChEBI" id="CHEBI:57305"/>
        <dbReference type="ChEBI" id="CHEBI:78442"/>
        <dbReference type="ChEBI" id="CHEBI:78522"/>
        <dbReference type="EC" id="3.1.1.96"/>
    </reaction>
</comment>
<comment type="catalytic activity">
    <reaction evidence="1">
        <text>a D-aminoacyl-tRNA + H2O = a tRNA + a D-alpha-amino acid + H(+)</text>
        <dbReference type="Rhea" id="RHEA:13953"/>
        <dbReference type="Rhea" id="RHEA-COMP:10123"/>
        <dbReference type="Rhea" id="RHEA-COMP:10124"/>
        <dbReference type="ChEBI" id="CHEBI:15377"/>
        <dbReference type="ChEBI" id="CHEBI:15378"/>
        <dbReference type="ChEBI" id="CHEBI:59871"/>
        <dbReference type="ChEBI" id="CHEBI:78442"/>
        <dbReference type="ChEBI" id="CHEBI:79333"/>
        <dbReference type="EC" id="3.1.1.96"/>
    </reaction>
</comment>
<comment type="subunit">
    <text evidence="1">Homodimer.</text>
</comment>
<comment type="subcellular location">
    <subcellularLocation>
        <location evidence="1">Cytoplasm</location>
    </subcellularLocation>
</comment>
<comment type="domain">
    <text evidence="1">A Gly-cisPro motif from one monomer fits into the active site of the other monomer to allow specific chiral rejection of L-amino acids.</text>
</comment>
<comment type="similarity">
    <text evidence="1">Belongs to the DTD family.</text>
</comment>
<name>DTD_VARPS</name>
<keyword id="KW-0963">Cytoplasm</keyword>
<keyword id="KW-0378">Hydrolase</keyword>
<keyword id="KW-0694">RNA-binding</keyword>
<keyword id="KW-0820">tRNA-binding</keyword>
<sequence length="146" mass="15403">MKAIVQRVASARVDIAGQTVGAIGAGLLVLLCAERGDADAMADRMLAKLLKLRIFSDEAGKMNRSVQDIGGGLLVVSQFTLAADVSGGNRPSFTQAAAPDEGRRLYDYFVHRARAAHPLVATGEFGADMQVHLVNDGPVTIPLQMA</sequence>
<feature type="chain" id="PRO_1000211740" description="D-aminoacyl-tRNA deacylase">
    <location>
        <begin position="1"/>
        <end position="146"/>
    </location>
</feature>
<feature type="short sequence motif" description="Gly-cisPro motif, important for rejection of L-amino acids" evidence="1">
    <location>
        <begin position="137"/>
        <end position="138"/>
    </location>
</feature>
<reference key="1">
    <citation type="journal article" date="2011" name="J. Bacteriol.">
        <title>Complete genome sequence of the metabolically versatile plant growth-promoting endophyte, Variovorax paradoxus S110.</title>
        <authorList>
            <person name="Han J.I."/>
            <person name="Choi H.K."/>
            <person name="Lee S.W."/>
            <person name="Orwin P.M."/>
            <person name="Kim J."/>
            <person name="Laroe S.L."/>
            <person name="Kim T.G."/>
            <person name="O'Neil J."/>
            <person name="Leadbetter J.R."/>
            <person name="Lee S.Y."/>
            <person name="Hur C.G."/>
            <person name="Spain J.C."/>
            <person name="Ovchinnikova G."/>
            <person name="Goodwin L."/>
            <person name="Han C."/>
        </authorList>
    </citation>
    <scope>NUCLEOTIDE SEQUENCE [LARGE SCALE GENOMIC DNA]</scope>
    <source>
        <strain>S110</strain>
    </source>
</reference>